<proteinExistence type="inferred from homology"/>
<evidence type="ECO:0000255" key="1">
    <source>
        <dbReference type="HAMAP-Rule" id="MF_00392"/>
    </source>
</evidence>
<protein>
    <recommendedName>
        <fullName evidence="1">Lipid-A-disaccharide synthase</fullName>
        <ecNumber evidence="1">2.4.1.182</ecNumber>
    </recommendedName>
</protein>
<gene>
    <name evidence="1" type="primary">lpxB</name>
    <name type="ordered locus">FTW_0358</name>
</gene>
<keyword id="KW-0328">Glycosyltransferase</keyword>
<keyword id="KW-0441">Lipid A biosynthesis</keyword>
<keyword id="KW-0444">Lipid biosynthesis</keyword>
<keyword id="KW-0443">Lipid metabolism</keyword>
<keyword id="KW-0808">Transferase</keyword>
<feature type="chain" id="PRO_1000049399" description="Lipid-A-disaccharide synthase">
    <location>
        <begin position="1"/>
        <end position="380"/>
    </location>
</feature>
<accession>A4IWJ7</accession>
<organism>
    <name type="scientific">Francisella tularensis subsp. tularensis (strain WY96-3418)</name>
    <dbReference type="NCBI Taxonomy" id="418136"/>
    <lineage>
        <taxon>Bacteria</taxon>
        <taxon>Pseudomonadati</taxon>
        <taxon>Pseudomonadota</taxon>
        <taxon>Gammaproteobacteria</taxon>
        <taxon>Thiotrichales</taxon>
        <taxon>Francisellaceae</taxon>
        <taxon>Francisella</taxon>
    </lineage>
</organism>
<reference key="1">
    <citation type="journal article" date="2007" name="PLoS ONE">
        <title>Complete genomic characterization of a pathogenic A.II strain of Francisella tularensis subspecies tularensis.</title>
        <authorList>
            <person name="Beckstrom-Sternberg S.M."/>
            <person name="Auerbach R.K."/>
            <person name="Godbole S."/>
            <person name="Pearson J.V."/>
            <person name="Beckstrom-Sternberg J.S."/>
            <person name="Deng Z."/>
            <person name="Munk C."/>
            <person name="Kubota K."/>
            <person name="Zhou Y."/>
            <person name="Bruce D."/>
            <person name="Noronha J."/>
            <person name="Scheuermann R.H."/>
            <person name="Wang A."/>
            <person name="Wei X."/>
            <person name="Wang J."/>
            <person name="Hao J."/>
            <person name="Wagner D.M."/>
            <person name="Brettin T.S."/>
            <person name="Brown N."/>
            <person name="Gilna P."/>
            <person name="Keim P.S."/>
        </authorList>
    </citation>
    <scope>NUCLEOTIDE SEQUENCE [LARGE SCALE GENOMIC DNA]</scope>
    <source>
        <strain>WY96-3418</strain>
    </source>
</reference>
<sequence length="380" mass="43088">MRIGIVAGELSGDQLGGTLVEALKQKYPNAIIEGIGGPKMAAAGFKSLYPMDALSLIGFLEIISKGLRILSIRRKIINYFKQNKPDIFIGIDAPDFNLTVEKELRSAGIKTIHYVSPKIWVWREYRIKKIRKATDKILAILPFETEYYKNRHKFEAIYVGHPLAKNIPIHIDRAKYRDKLGLKGSSLPILSVLPGSRTTEVSRLLPLFLLALQKLVDAGYKFKAIMPLAKPSLKPLFAKYKEQIDSLGIEVFETNSHDVLKASDLSLLASGTATLEAMLCKLPMVVGYKLSWLSALIGRMLIGNHSYWAFPNILHKNEIIKELIQEDCTVDNLFSELKRLFDDKRRNDYIVEEFEKIHKEMVIDTESKIIQVLDTMIEKS</sequence>
<dbReference type="EC" id="2.4.1.182" evidence="1"/>
<dbReference type="EMBL" id="CP000608">
    <property type="protein sequence ID" value="ABO46299.1"/>
    <property type="molecule type" value="Genomic_DNA"/>
</dbReference>
<dbReference type="RefSeq" id="WP_003014884.1">
    <property type="nucleotide sequence ID" value="NC_009257.1"/>
</dbReference>
<dbReference type="SMR" id="A4IWJ7"/>
<dbReference type="CAZy" id="GT19">
    <property type="family name" value="Glycosyltransferase Family 19"/>
</dbReference>
<dbReference type="KEGG" id="ftw:FTW_0358"/>
<dbReference type="HOGENOM" id="CLU_036577_3_0_6"/>
<dbReference type="UniPathway" id="UPA00973"/>
<dbReference type="GO" id="GO:0016020">
    <property type="term" value="C:membrane"/>
    <property type="evidence" value="ECO:0007669"/>
    <property type="project" value="GOC"/>
</dbReference>
<dbReference type="GO" id="GO:0008915">
    <property type="term" value="F:lipid-A-disaccharide synthase activity"/>
    <property type="evidence" value="ECO:0007669"/>
    <property type="project" value="UniProtKB-UniRule"/>
</dbReference>
<dbReference type="GO" id="GO:0005543">
    <property type="term" value="F:phospholipid binding"/>
    <property type="evidence" value="ECO:0007669"/>
    <property type="project" value="TreeGrafter"/>
</dbReference>
<dbReference type="GO" id="GO:0009245">
    <property type="term" value="P:lipid A biosynthetic process"/>
    <property type="evidence" value="ECO:0007669"/>
    <property type="project" value="UniProtKB-UniRule"/>
</dbReference>
<dbReference type="CDD" id="cd01635">
    <property type="entry name" value="Glycosyltransferase_GTB-type"/>
    <property type="match status" value="1"/>
</dbReference>
<dbReference type="Gene3D" id="3.40.50.2000">
    <property type="entry name" value="Glycogen Phosphorylase B"/>
    <property type="match status" value="2"/>
</dbReference>
<dbReference type="HAMAP" id="MF_00392">
    <property type="entry name" value="LpxB"/>
    <property type="match status" value="1"/>
</dbReference>
<dbReference type="InterPro" id="IPR003835">
    <property type="entry name" value="Glyco_trans_19"/>
</dbReference>
<dbReference type="NCBIfam" id="TIGR00215">
    <property type="entry name" value="lpxB"/>
    <property type="match status" value="1"/>
</dbReference>
<dbReference type="PANTHER" id="PTHR30372">
    <property type="entry name" value="LIPID-A-DISACCHARIDE SYNTHASE"/>
    <property type="match status" value="1"/>
</dbReference>
<dbReference type="PANTHER" id="PTHR30372:SF4">
    <property type="entry name" value="LIPID-A-DISACCHARIDE SYNTHASE, MITOCHONDRIAL-RELATED"/>
    <property type="match status" value="1"/>
</dbReference>
<dbReference type="Pfam" id="PF02684">
    <property type="entry name" value="LpxB"/>
    <property type="match status" value="1"/>
</dbReference>
<dbReference type="SUPFAM" id="SSF53756">
    <property type="entry name" value="UDP-Glycosyltransferase/glycogen phosphorylase"/>
    <property type="match status" value="1"/>
</dbReference>
<comment type="function">
    <text evidence="1">Condensation of UDP-2,3-diacylglucosamine and 2,3-diacylglucosamine-1-phosphate to form lipid A disaccharide, a precursor of lipid A, a phosphorylated glycolipid that anchors the lipopolysaccharide to the outer membrane of the cell.</text>
</comment>
<comment type="catalytic activity">
    <reaction evidence="1">
        <text>a lipid X + a UDP-2-N,3-O-bis[(3R)-3-hydroxyacyl]-alpha-D-glucosamine = a lipid A disaccharide + UDP + H(+)</text>
        <dbReference type="Rhea" id="RHEA:67828"/>
        <dbReference type="ChEBI" id="CHEBI:15378"/>
        <dbReference type="ChEBI" id="CHEBI:58223"/>
        <dbReference type="ChEBI" id="CHEBI:137748"/>
        <dbReference type="ChEBI" id="CHEBI:176338"/>
        <dbReference type="ChEBI" id="CHEBI:176343"/>
        <dbReference type="EC" id="2.4.1.182"/>
    </reaction>
</comment>
<comment type="pathway">
    <text evidence="1">Bacterial outer membrane biogenesis; LPS lipid A biosynthesis.</text>
</comment>
<comment type="similarity">
    <text evidence="1">Belongs to the LpxB family.</text>
</comment>
<name>LPXB_FRATW</name>